<feature type="chain" id="PRO_1000048728" description="Chromosomal replication initiator protein DnaA">
    <location>
        <begin position="1"/>
        <end position="467"/>
    </location>
</feature>
<feature type="region of interest" description="Domain I, interacts with DnaA modulators" evidence="1">
    <location>
        <begin position="1"/>
        <end position="90"/>
    </location>
</feature>
<feature type="region of interest" description="Domain II" evidence="1">
    <location>
        <begin position="91"/>
        <end position="130"/>
    </location>
</feature>
<feature type="region of interest" description="Disordered" evidence="2">
    <location>
        <begin position="98"/>
        <end position="119"/>
    </location>
</feature>
<feature type="region of interest" description="Domain III, AAA+ region" evidence="1">
    <location>
        <begin position="131"/>
        <end position="347"/>
    </location>
</feature>
<feature type="region of interest" description="Domain IV, binds dsDNA" evidence="1">
    <location>
        <begin position="348"/>
        <end position="467"/>
    </location>
</feature>
<feature type="compositionally biased region" description="Low complexity" evidence="2">
    <location>
        <begin position="98"/>
        <end position="111"/>
    </location>
</feature>
<feature type="binding site" evidence="1">
    <location>
        <position position="175"/>
    </location>
    <ligand>
        <name>ATP</name>
        <dbReference type="ChEBI" id="CHEBI:30616"/>
    </ligand>
</feature>
<feature type="binding site" evidence="1">
    <location>
        <position position="177"/>
    </location>
    <ligand>
        <name>ATP</name>
        <dbReference type="ChEBI" id="CHEBI:30616"/>
    </ligand>
</feature>
<feature type="binding site" evidence="1">
    <location>
        <position position="178"/>
    </location>
    <ligand>
        <name>ATP</name>
        <dbReference type="ChEBI" id="CHEBI:30616"/>
    </ligand>
</feature>
<feature type="binding site" evidence="1">
    <location>
        <position position="179"/>
    </location>
    <ligand>
        <name>ATP</name>
        <dbReference type="ChEBI" id="CHEBI:30616"/>
    </ligand>
</feature>
<evidence type="ECO:0000255" key="1">
    <source>
        <dbReference type="HAMAP-Rule" id="MF_00377"/>
    </source>
</evidence>
<evidence type="ECO:0000256" key="2">
    <source>
        <dbReference type="SAM" id="MobiDB-lite"/>
    </source>
</evidence>
<protein>
    <recommendedName>
        <fullName evidence="1">Chromosomal replication initiator protein DnaA</fullName>
    </recommendedName>
</protein>
<dbReference type="EMBL" id="CP000038">
    <property type="protein sequence ID" value="AAZ90200.1"/>
    <property type="molecule type" value="Genomic_DNA"/>
</dbReference>
<dbReference type="RefSeq" id="WP_000059111.1">
    <property type="nucleotide sequence ID" value="NC_007384.1"/>
</dbReference>
<dbReference type="SMR" id="Q3YWB2"/>
<dbReference type="GeneID" id="93778443"/>
<dbReference type="KEGG" id="ssn:SSON_3652"/>
<dbReference type="HOGENOM" id="CLU_026910_0_1_6"/>
<dbReference type="Proteomes" id="UP000002529">
    <property type="component" value="Chromosome"/>
</dbReference>
<dbReference type="GO" id="GO:0005737">
    <property type="term" value="C:cytoplasm"/>
    <property type="evidence" value="ECO:0007669"/>
    <property type="project" value="UniProtKB-SubCell"/>
</dbReference>
<dbReference type="GO" id="GO:0005886">
    <property type="term" value="C:plasma membrane"/>
    <property type="evidence" value="ECO:0007669"/>
    <property type="project" value="TreeGrafter"/>
</dbReference>
<dbReference type="GO" id="GO:0005524">
    <property type="term" value="F:ATP binding"/>
    <property type="evidence" value="ECO:0007669"/>
    <property type="project" value="UniProtKB-UniRule"/>
</dbReference>
<dbReference type="GO" id="GO:0016887">
    <property type="term" value="F:ATP hydrolysis activity"/>
    <property type="evidence" value="ECO:0007669"/>
    <property type="project" value="InterPro"/>
</dbReference>
<dbReference type="GO" id="GO:0003688">
    <property type="term" value="F:DNA replication origin binding"/>
    <property type="evidence" value="ECO:0007669"/>
    <property type="project" value="UniProtKB-UniRule"/>
</dbReference>
<dbReference type="GO" id="GO:0008289">
    <property type="term" value="F:lipid binding"/>
    <property type="evidence" value="ECO:0007669"/>
    <property type="project" value="UniProtKB-KW"/>
</dbReference>
<dbReference type="GO" id="GO:0006270">
    <property type="term" value="P:DNA replication initiation"/>
    <property type="evidence" value="ECO:0007669"/>
    <property type="project" value="UniProtKB-UniRule"/>
</dbReference>
<dbReference type="GO" id="GO:0006275">
    <property type="term" value="P:regulation of DNA replication"/>
    <property type="evidence" value="ECO:0007669"/>
    <property type="project" value="UniProtKB-UniRule"/>
</dbReference>
<dbReference type="CDD" id="cd00009">
    <property type="entry name" value="AAA"/>
    <property type="match status" value="1"/>
</dbReference>
<dbReference type="CDD" id="cd06571">
    <property type="entry name" value="Bac_DnaA_C"/>
    <property type="match status" value="1"/>
</dbReference>
<dbReference type="FunFam" id="1.10.1750.10:FF:000001">
    <property type="entry name" value="Chromosomal replication initiator protein DnaA"/>
    <property type="match status" value="1"/>
</dbReference>
<dbReference type="FunFam" id="1.10.8.60:FF:000003">
    <property type="entry name" value="Chromosomal replication initiator protein DnaA"/>
    <property type="match status" value="1"/>
</dbReference>
<dbReference type="FunFam" id="3.30.300.180:FF:000001">
    <property type="entry name" value="Chromosomal replication initiator protein DnaA"/>
    <property type="match status" value="1"/>
</dbReference>
<dbReference type="FunFam" id="3.40.50.300:FF:000103">
    <property type="entry name" value="Chromosomal replication initiator protein DnaA"/>
    <property type="match status" value="1"/>
</dbReference>
<dbReference type="Gene3D" id="1.10.1750.10">
    <property type="match status" value="1"/>
</dbReference>
<dbReference type="Gene3D" id="1.10.8.60">
    <property type="match status" value="1"/>
</dbReference>
<dbReference type="Gene3D" id="3.30.300.180">
    <property type="match status" value="1"/>
</dbReference>
<dbReference type="Gene3D" id="3.40.50.300">
    <property type="entry name" value="P-loop containing nucleotide triphosphate hydrolases"/>
    <property type="match status" value="1"/>
</dbReference>
<dbReference type="HAMAP" id="MF_00377">
    <property type="entry name" value="DnaA_bact"/>
    <property type="match status" value="1"/>
</dbReference>
<dbReference type="InterPro" id="IPR003593">
    <property type="entry name" value="AAA+_ATPase"/>
</dbReference>
<dbReference type="InterPro" id="IPR001957">
    <property type="entry name" value="Chromosome_initiator_DnaA"/>
</dbReference>
<dbReference type="InterPro" id="IPR020591">
    <property type="entry name" value="Chromosome_initiator_DnaA-like"/>
</dbReference>
<dbReference type="InterPro" id="IPR018312">
    <property type="entry name" value="Chromosome_initiator_DnaA_CS"/>
</dbReference>
<dbReference type="InterPro" id="IPR013159">
    <property type="entry name" value="DnaA_C"/>
</dbReference>
<dbReference type="InterPro" id="IPR013317">
    <property type="entry name" value="DnaA_dom"/>
</dbReference>
<dbReference type="InterPro" id="IPR024633">
    <property type="entry name" value="DnaA_N_dom"/>
</dbReference>
<dbReference type="InterPro" id="IPR038454">
    <property type="entry name" value="DnaA_N_sf"/>
</dbReference>
<dbReference type="InterPro" id="IPR027417">
    <property type="entry name" value="P-loop_NTPase"/>
</dbReference>
<dbReference type="InterPro" id="IPR010921">
    <property type="entry name" value="Trp_repressor/repl_initiator"/>
</dbReference>
<dbReference type="NCBIfam" id="TIGR00362">
    <property type="entry name" value="DnaA"/>
    <property type="match status" value="1"/>
</dbReference>
<dbReference type="PANTHER" id="PTHR30050">
    <property type="entry name" value="CHROMOSOMAL REPLICATION INITIATOR PROTEIN DNAA"/>
    <property type="match status" value="1"/>
</dbReference>
<dbReference type="PANTHER" id="PTHR30050:SF2">
    <property type="entry name" value="CHROMOSOMAL REPLICATION INITIATOR PROTEIN DNAA"/>
    <property type="match status" value="1"/>
</dbReference>
<dbReference type="Pfam" id="PF00308">
    <property type="entry name" value="Bac_DnaA"/>
    <property type="match status" value="1"/>
</dbReference>
<dbReference type="Pfam" id="PF08299">
    <property type="entry name" value="Bac_DnaA_C"/>
    <property type="match status" value="1"/>
</dbReference>
<dbReference type="Pfam" id="PF11638">
    <property type="entry name" value="DnaA_N"/>
    <property type="match status" value="1"/>
</dbReference>
<dbReference type="PRINTS" id="PR00051">
    <property type="entry name" value="DNAA"/>
</dbReference>
<dbReference type="SMART" id="SM00382">
    <property type="entry name" value="AAA"/>
    <property type="match status" value="1"/>
</dbReference>
<dbReference type="SMART" id="SM00760">
    <property type="entry name" value="Bac_DnaA_C"/>
    <property type="match status" value="1"/>
</dbReference>
<dbReference type="SUPFAM" id="SSF52540">
    <property type="entry name" value="P-loop containing nucleoside triphosphate hydrolases"/>
    <property type="match status" value="1"/>
</dbReference>
<dbReference type="SUPFAM" id="SSF48295">
    <property type="entry name" value="TrpR-like"/>
    <property type="match status" value="1"/>
</dbReference>
<dbReference type="PROSITE" id="PS01008">
    <property type="entry name" value="DNAA"/>
    <property type="match status" value="1"/>
</dbReference>
<organism>
    <name type="scientific">Shigella sonnei (strain Ss046)</name>
    <dbReference type="NCBI Taxonomy" id="300269"/>
    <lineage>
        <taxon>Bacteria</taxon>
        <taxon>Pseudomonadati</taxon>
        <taxon>Pseudomonadota</taxon>
        <taxon>Gammaproteobacteria</taxon>
        <taxon>Enterobacterales</taxon>
        <taxon>Enterobacteriaceae</taxon>
        <taxon>Shigella</taxon>
    </lineage>
</organism>
<comment type="function">
    <text evidence="1">Plays an essential role in the initiation and regulation of chromosomal replication. ATP-DnaA binds to the origin of replication (oriC) to initiate formation of the DNA replication initiation complex once per cell cycle. Binds the DnaA box (a 9 base pair repeat at the origin) and separates the double-stranded (ds)DNA. Forms a right-handed helical filament on oriC DNA; dsDNA binds to the exterior of the filament while single-stranded (ss)DNA is stabiized in the filament's interior. The ATP-DnaA-oriC complex binds and stabilizes one strand of the AT-rich DNA unwinding element (DUE), permitting loading of DNA polymerase. After initiation quickly degrades to an ADP-DnaA complex that is not apt for DNA replication. Binds acidic phospholipids.</text>
</comment>
<comment type="subunit">
    <text evidence="1">Oligomerizes as a right-handed, spiral filament on DNA at oriC.</text>
</comment>
<comment type="subcellular location">
    <subcellularLocation>
        <location evidence="1">Cytoplasm</location>
    </subcellularLocation>
</comment>
<comment type="domain">
    <text evidence="1">Domain I is involved in oligomerization and binding regulators, domain II is flexibile and of varying length in different bacteria, domain III forms the AAA+ region, while domain IV binds dsDNA.</text>
</comment>
<comment type="similarity">
    <text evidence="1">Belongs to the DnaA family.</text>
</comment>
<gene>
    <name evidence="1" type="primary">dnaA</name>
    <name type="ordered locus">SSON_3652</name>
</gene>
<sequence length="467" mass="52551">MSLSLWQQCLARLQDELPATEFSMWIRPLQAELSDNTLALYAPNRFVLDWVRDKYLNNINGLLTSFCGADAPQLRFEVGTKPVTQTPQAAVTSNVAAPAQVAQTQPQRAAPSTRSGWDNVPAPAEPTYRSNVNVKHTFDNFVEGKSNQLARAAARQVADNPGGAYNPLFLYGGTGLGKTHLLHAVGNGIMARKPNAKVVYMHSERFVQDMVKALQNNAIEEFKRYYRSVDALLIDDIQFFANKERSQEEFFHTFNALLEGNQQIILTSDRYPKEINGVEDRLKSRFGWGLTVAIEPPELETRVAILMKKADENDIRLPGEVAFFIAKRLRSNVRELEGALNRVIANANFTGRAITIDFVREALRDLLALQEKLVTIDNIQKTVAEYYKIKVADLLSKRRSRSVARPRQMAMALAKELTNHSLPEIGDAFGGRDHTTVLHACRKIEQLREESHDIKEDFSNLIRTLSS</sequence>
<proteinExistence type="inferred from homology"/>
<name>DNAA_SHISS</name>
<reference key="1">
    <citation type="journal article" date="2005" name="Nucleic Acids Res.">
        <title>Genome dynamics and diversity of Shigella species, the etiologic agents of bacillary dysentery.</title>
        <authorList>
            <person name="Yang F."/>
            <person name="Yang J."/>
            <person name="Zhang X."/>
            <person name="Chen L."/>
            <person name="Jiang Y."/>
            <person name="Yan Y."/>
            <person name="Tang X."/>
            <person name="Wang J."/>
            <person name="Xiong Z."/>
            <person name="Dong J."/>
            <person name="Xue Y."/>
            <person name="Zhu Y."/>
            <person name="Xu X."/>
            <person name="Sun L."/>
            <person name="Chen S."/>
            <person name="Nie H."/>
            <person name="Peng J."/>
            <person name="Xu J."/>
            <person name="Wang Y."/>
            <person name="Yuan Z."/>
            <person name="Wen Y."/>
            <person name="Yao Z."/>
            <person name="Shen Y."/>
            <person name="Qiang B."/>
            <person name="Hou Y."/>
            <person name="Yu J."/>
            <person name="Jin Q."/>
        </authorList>
    </citation>
    <scope>NUCLEOTIDE SEQUENCE [LARGE SCALE GENOMIC DNA]</scope>
    <source>
        <strain>Ss046</strain>
    </source>
</reference>
<keyword id="KW-0067">ATP-binding</keyword>
<keyword id="KW-0963">Cytoplasm</keyword>
<keyword id="KW-0235">DNA replication</keyword>
<keyword id="KW-0238">DNA-binding</keyword>
<keyword id="KW-0446">Lipid-binding</keyword>
<keyword id="KW-0547">Nucleotide-binding</keyword>
<keyword id="KW-1185">Reference proteome</keyword>
<accession>Q3YWB2</accession>